<accession>A2R5N0</accession>
<reference key="1">
    <citation type="journal article" date="2007" name="Nat. Biotechnol.">
        <title>Genome sequencing and analysis of the versatile cell factory Aspergillus niger CBS 513.88.</title>
        <authorList>
            <person name="Pel H.J."/>
            <person name="de Winde J.H."/>
            <person name="Archer D.B."/>
            <person name="Dyer P.S."/>
            <person name="Hofmann G."/>
            <person name="Schaap P.J."/>
            <person name="Turner G."/>
            <person name="de Vries R.P."/>
            <person name="Albang R."/>
            <person name="Albermann K."/>
            <person name="Andersen M.R."/>
            <person name="Bendtsen J.D."/>
            <person name="Benen J.A.E."/>
            <person name="van den Berg M."/>
            <person name="Breestraat S."/>
            <person name="Caddick M.X."/>
            <person name="Contreras R."/>
            <person name="Cornell M."/>
            <person name="Coutinho P.M."/>
            <person name="Danchin E.G.J."/>
            <person name="Debets A.J.M."/>
            <person name="Dekker P."/>
            <person name="van Dijck P.W.M."/>
            <person name="van Dijk A."/>
            <person name="Dijkhuizen L."/>
            <person name="Driessen A.J.M."/>
            <person name="d'Enfert C."/>
            <person name="Geysens S."/>
            <person name="Goosen C."/>
            <person name="Groot G.S.P."/>
            <person name="de Groot P.W.J."/>
            <person name="Guillemette T."/>
            <person name="Henrissat B."/>
            <person name="Herweijer M."/>
            <person name="van den Hombergh J.P.T.W."/>
            <person name="van den Hondel C.A.M.J.J."/>
            <person name="van der Heijden R.T.J.M."/>
            <person name="van der Kaaij R.M."/>
            <person name="Klis F.M."/>
            <person name="Kools H.J."/>
            <person name="Kubicek C.P."/>
            <person name="van Kuyk P.A."/>
            <person name="Lauber J."/>
            <person name="Lu X."/>
            <person name="van der Maarel M.J.E.C."/>
            <person name="Meulenberg R."/>
            <person name="Menke H."/>
            <person name="Mortimer M.A."/>
            <person name="Nielsen J."/>
            <person name="Oliver S.G."/>
            <person name="Olsthoorn M."/>
            <person name="Pal K."/>
            <person name="van Peij N.N.M.E."/>
            <person name="Ram A.F.J."/>
            <person name="Rinas U."/>
            <person name="Roubos J.A."/>
            <person name="Sagt C.M.J."/>
            <person name="Schmoll M."/>
            <person name="Sun J."/>
            <person name="Ussery D."/>
            <person name="Varga J."/>
            <person name="Vervecken W."/>
            <person name="van de Vondervoort P.J.J."/>
            <person name="Wedler H."/>
            <person name="Woesten H.A.B."/>
            <person name="Zeng A.-P."/>
            <person name="van Ooyen A.J.J."/>
            <person name="Visser J."/>
            <person name="Stam H."/>
        </authorList>
    </citation>
    <scope>NUCLEOTIDE SEQUENCE [LARGE SCALE GENOMIC DNA]</scope>
    <source>
        <strain>ATCC MYA-4892 / CBS 513.88 / FGSC A1513</strain>
    </source>
</reference>
<feature type="signal peptide" evidence="6">
    <location>
        <begin position="1"/>
        <end position="20"/>
    </location>
</feature>
<feature type="chain" id="PRO_5000221057" description="AA9 family lytic polysaccharide monooxygenase A">
    <location>
        <begin position="21"/>
        <end position="412"/>
    </location>
</feature>
<feature type="domain" description="CBM1" evidence="7">
    <location>
        <begin position="373"/>
        <end position="409"/>
    </location>
</feature>
<feature type="binding site" evidence="1">
    <location>
        <position position="21"/>
    </location>
    <ligand>
        <name>Cu(2+)</name>
        <dbReference type="ChEBI" id="CHEBI:29036"/>
        <note>catalytic</note>
    </ligand>
</feature>
<feature type="binding site" evidence="1">
    <location>
        <position position="103"/>
    </location>
    <ligand>
        <name>Cu(2+)</name>
        <dbReference type="ChEBI" id="CHEBI:29036"/>
        <note>catalytic</note>
    </ligand>
</feature>
<feature type="binding site" evidence="2">
    <location>
        <position position="172"/>
    </location>
    <ligand>
        <name>O2</name>
        <dbReference type="ChEBI" id="CHEBI:15379"/>
    </ligand>
</feature>
<feature type="binding site" evidence="1">
    <location>
        <position position="183"/>
    </location>
    <ligand>
        <name>Cu(2+)</name>
        <dbReference type="ChEBI" id="CHEBI:29036"/>
        <note>catalytic</note>
    </ligand>
</feature>
<feature type="glycosylation site" description="N-linked (GlcNAc...) asparagine" evidence="6">
    <location>
        <position position="151"/>
    </location>
</feature>
<feature type="glycosylation site" description="N-linked (GlcNAc...) asparagine" evidence="6">
    <location>
        <position position="334"/>
    </location>
</feature>
<feature type="glycosylation site" description="N-linked (GlcNAc...) asparagine" evidence="6">
    <location>
        <position position="385"/>
    </location>
</feature>
<feature type="disulfide bond" evidence="1">
    <location>
        <begin position="63"/>
        <end position="186"/>
    </location>
</feature>
<sequence>MKTTTYSLLALAAASKLASAHTTVQAVWINGEDQGLGNSADGYIRSPPSNSPVTDVTSTDMTCNVNGDQAASKTLSVKAGDVVTFEWHHSDRSDSDDIIASSHKGPVQVYMAPTAKGSNGNNWVKIAEDGYHKSSDEWATDILIANKGKHNITVPDVPAGNYLFRPEIIALHEGNREGGAQFYMECVQFKVTSDGSSELPSGVSIPGVYTATDPGILFDIYNSFDSYPIPGPDVWDGSSSGSSSGSSSAAAAATTSAAVAATTPATQAAVEVSSSAAAVVESTSSAAAATTEAAAPVVSSAAPVQQATSAVTSQAQAPTTFATSSKSSKTACKNKTKSKSKVAASSTEAVVAPAPTSSVVPAVSASASASAGGVAKMYERCGGINHTGPTTCESGSVCKKWNPYYYQCVASQ</sequence>
<evidence type="ECO:0000250" key="1">
    <source>
        <dbReference type="UniProtKB" id="A0A223GEC9"/>
    </source>
</evidence>
<evidence type="ECO:0000250" key="2">
    <source>
        <dbReference type="UniProtKB" id="Q1K8B6"/>
    </source>
</evidence>
<evidence type="ECO:0000250" key="3">
    <source>
        <dbReference type="UniProtKB" id="Q2US83"/>
    </source>
</evidence>
<evidence type="ECO:0000250" key="4">
    <source>
        <dbReference type="UniProtKB" id="Q4WP32"/>
    </source>
</evidence>
<evidence type="ECO:0000250" key="5">
    <source>
        <dbReference type="UniProtKB" id="Q7S439"/>
    </source>
</evidence>
<evidence type="ECO:0000255" key="6"/>
<evidence type="ECO:0000255" key="7">
    <source>
        <dbReference type="PROSITE-ProRule" id="PRU00597"/>
    </source>
</evidence>
<evidence type="ECO:0000305" key="8"/>
<gene>
    <name type="primary">eglD</name>
    <name type="ORF">An15g04900</name>
</gene>
<protein>
    <recommendedName>
        <fullName evidence="3">AA9 family lytic polysaccharide monooxygenase A</fullName>
        <shortName evidence="3">AA9A</shortName>
        <ecNumber evidence="3">1.14.99.56</ecNumber>
    </recommendedName>
    <alternativeName>
        <fullName evidence="8">Cellulase AA9A</fullName>
    </alternativeName>
    <alternativeName>
        <fullName evidence="8">Endo-beta-1,4-glucanase AA9A</fullName>
        <shortName evidence="8">Endoglucanase AA9A</shortName>
    </alternativeName>
    <alternativeName>
        <fullName evidence="8">Glycosyl hydrolase 61 family protein AA9A</fullName>
    </alternativeName>
</protein>
<proteinExistence type="inferred from homology"/>
<name>LP9A_ASPNC</name>
<comment type="function">
    <text evidence="3">Lytic polysaccharide monooxygenase (LPMO) that depolymerizes crystalline and amorphous polysaccharides via the oxidation of scissile alpha- or beta-(1-4)-glycosidic bonds, yielding C4 oxidation products (By similarity). Catalysis by LPMOs requires the reduction of the active-site copper from Cu(II) to Cu(I) by a reducing agent and H(2)O(2) or O(2) as a cosubstrate (By similarity).</text>
</comment>
<comment type="catalytic activity">
    <reaction evidence="3">
        <text>[(1-&gt;4)-beta-D-glucosyl]n+m + reduced acceptor + O2 = 4-dehydro-beta-D-glucosyl-[(1-&gt;4)-beta-D-glucosyl]n-1 + [(1-&gt;4)-beta-D-glucosyl]m + acceptor + H2O.</text>
        <dbReference type="EC" id="1.14.99.56"/>
    </reaction>
</comment>
<comment type="cofactor">
    <cofactor evidence="4">
        <name>Cu(2+)</name>
        <dbReference type="ChEBI" id="CHEBI:29036"/>
    </cofactor>
    <text evidence="4">Binds 1 copper ion per subunit.</text>
</comment>
<comment type="subcellular location">
    <subcellularLocation>
        <location evidence="3">Secreted</location>
    </subcellularLocation>
</comment>
<comment type="domain">
    <text evidence="5">Has a modular structure: an endo-beta-1,4-glucanase catalytic module at the N-terminus, a linker rich in serines and threonines, and a C-terminal carbohydrate-binding module (CBM). The CBM domain is essential for binding to and subsequent oxidative degradation of polysaccharide substrate.</text>
</comment>
<comment type="biotechnology">
    <text evidence="4">Lignocellulose is the most abundant polymeric composite on Earth and is a recalcitrant but promising renewable substrate for industrial biotechnology applications. Together with cellobiose dehydrogenases (CDHs) an enzymatic system capable of oxidative cellulose cleavage is formed, which increases the efficiency of cellulases and put LPMOs at focus of biofuel research.</text>
</comment>
<comment type="similarity">
    <text evidence="8">Belongs to the polysaccharide monooxygenase AA9 family.</text>
</comment>
<keyword id="KW-0119">Carbohydrate metabolism</keyword>
<keyword id="KW-0136">Cellulose degradation</keyword>
<keyword id="KW-0186">Copper</keyword>
<keyword id="KW-1015">Disulfide bond</keyword>
<keyword id="KW-0325">Glycoprotein</keyword>
<keyword id="KW-0479">Metal-binding</keyword>
<keyword id="KW-0503">Monooxygenase</keyword>
<keyword id="KW-0560">Oxidoreductase</keyword>
<keyword id="KW-0624">Polysaccharide degradation</keyword>
<keyword id="KW-1185">Reference proteome</keyword>
<keyword id="KW-0964">Secreted</keyword>
<keyword id="KW-0732">Signal</keyword>
<organism>
    <name type="scientific">Aspergillus niger (strain ATCC MYA-4892 / CBS 513.88 / FGSC A1513)</name>
    <dbReference type="NCBI Taxonomy" id="425011"/>
    <lineage>
        <taxon>Eukaryota</taxon>
        <taxon>Fungi</taxon>
        <taxon>Dikarya</taxon>
        <taxon>Ascomycota</taxon>
        <taxon>Pezizomycotina</taxon>
        <taxon>Eurotiomycetes</taxon>
        <taxon>Eurotiomycetidae</taxon>
        <taxon>Eurotiales</taxon>
        <taxon>Aspergillaceae</taxon>
        <taxon>Aspergillus</taxon>
        <taxon>Aspergillus subgen. Circumdati</taxon>
    </lineage>
</organism>
<dbReference type="EC" id="1.14.99.56" evidence="3"/>
<dbReference type="EMBL" id="AM270345">
    <property type="protein sequence ID" value="CAK42466.1"/>
    <property type="molecule type" value="Genomic_DNA"/>
</dbReference>
<dbReference type="SMR" id="A2R5N0"/>
<dbReference type="CAZy" id="AA9">
    <property type="family name" value="Auxiliary Activities 9"/>
</dbReference>
<dbReference type="CAZy" id="CBM1">
    <property type="family name" value="Carbohydrate-Binding Module Family 1"/>
</dbReference>
<dbReference type="GlyCosmos" id="A2R5N0">
    <property type="glycosylation" value="3 sites, No reported glycans"/>
</dbReference>
<dbReference type="EnsemblFungi" id="CAK42466">
    <property type="protein sequence ID" value="CAK42466"/>
    <property type="gene ID" value="An15g04900"/>
</dbReference>
<dbReference type="VEuPathDB" id="FungiDB:An15g04900"/>
<dbReference type="HOGENOM" id="CLU_031730_0_0_1"/>
<dbReference type="Proteomes" id="UP000006706">
    <property type="component" value="Chromosome 3R"/>
</dbReference>
<dbReference type="GO" id="GO:0005576">
    <property type="term" value="C:extracellular region"/>
    <property type="evidence" value="ECO:0007669"/>
    <property type="project" value="UniProtKB-SubCell"/>
</dbReference>
<dbReference type="GO" id="GO:0008810">
    <property type="term" value="F:cellulase activity"/>
    <property type="evidence" value="ECO:0007669"/>
    <property type="project" value="UniProtKB-EC"/>
</dbReference>
<dbReference type="GO" id="GO:0030248">
    <property type="term" value="F:cellulose binding"/>
    <property type="evidence" value="ECO:0007669"/>
    <property type="project" value="InterPro"/>
</dbReference>
<dbReference type="GO" id="GO:0046872">
    <property type="term" value="F:metal ion binding"/>
    <property type="evidence" value="ECO:0007669"/>
    <property type="project" value="UniProtKB-KW"/>
</dbReference>
<dbReference type="GO" id="GO:0004497">
    <property type="term" value="F:monooxygenase activity"/>
    <property type="evidence" value="ECO:0007669"/>
    <property type="project" value="UniProtKB-KW"/>
</dbReference>
<dbReference type="GO" id="GO:0030245">
    <property type="term" value="P:cellulose catabolic process"/>
    <property type="evidence" value="ECO:0007669"/>
    <property type="project" value="UniProtKB-KW"/>
</dbReference>
<dbReference type="CDD" id="cd21175">
    <property type="entry name" value="LPMO_AA9"/>
    <property type="match status" value="1"/>
</dbReference>
<dbReference type="Gene3D" id="2.70.50.70">
    <property type="match status" value="1"/>
</dbReference>
<dbReference type="InterPro" id="IPR049892">
    <property type="entry name" value="AA9"/>
</dbReference>
<dbReference type="InterPro" id="IPR005103">
    <property type="entry name" value="AA9_LPMO"/>
</dbReference>
<dbReference type="InterPro" id="IPR035971">
    <property type="entry name" value="CBD_sf"/>
</dbReference>
<dbReference type="InterPro" id="IPR000254">
    <property type="entry name" value="Cellulose-bd_dom_fun"/>
</dbReference>
<dbReference type="PANTHER" id="PTHR33353:SF17">
    <property type="entry name" value="ENDO-BETA-1,4-GLUCANASE D"/>
    <property type="match status" value="1"/>
</dbReference>
<dbReference type="PANTHER" id="PTHR33353">
    <property type="entry name" value="PUTATIVE (AFU_ORTHOLOGUE AFUA_1G12560)-RELATED"/>
    <property type="match status" value="1"/>
</dbReference>
<dbReference type="Pfam" id="PF03443">
    <property type="entry name" value="AA9"/>
    <property type="match status" value="1"/>
</dbReference>
<dbReference type="Pfam" id="PF00734">
    <property type="entry name" value="CBM_1"/>
    <property type="match status" value="1"/>
</dbReference>
<dbReference type="SMART" id="SM00236">
    <property type="entry name" value="fCBD"/>
    <property type="match status" value="1"/>
</dbReference>
<dbReference type="SUPFAM" id="SSF57180">
    <property type="entry name" value="Cellulose-binding domain"/>
    <property type="match status" value="1"/>
</dbReference>
<dbReference type="PROSITE" id="PS00562">
    <property type="entry name" value="CBM1_1"/>
    <property type="match status" value="1"/>
</dbReference>
<dbReference type="PROSITE" id="PS51164">
    <property type="entry name" value="CBM1_2"/>
    <property type="match status" value="1"/>
</dbReference>